<sequence>MKEIIEKLAKFENLSGVEMTDVIERIVTGRVTEAQIASLLLALKMKGETPEERTAIAQVMRGHAQHIPTEIHDAMDNCGTGGDKSFSFNISTTAAFVLAGGGIHMAKHGNRSISSKSGSADVLEALGINLDLKPAELGKVFDKTGIVFLFAKNMHPAMKYIMPARLELGIPTIMNLTGPLIHPMALETQLLGISRPELLESTAQVLKNMGRKRAIVVAGPEGLDEAGLNGTTKIALLENGEISLSSFTPEDLGMEGYAMEDIRGGNAQENAEILLSVLKNEASPFLETTVLNAGLGFYANGKIDSIKEGVALARQVIARGKALEKLRLLQEYQK</sequence>
<protein>
    <recommendedName>
        <fullName evidence="1">Anthranilate phosphoribosyltransferase</fullName>
        <ecNumber evidence="1">2.4.2.18</ecNumber>
    </recommendedName>
</protein>
<proteinExistence type="inferred from homology"/>
<comment type="function">
    <text evidence="1">Catalyzes the transfer of the phosphoribosyl group of 5-phosphorylribose-1-pyrophosphate (PRPP) to anthranilate to yield N-(5'-phosphoribosyl)-anthranilate (PRA).</text>
</comment>
<comment type="catalytic activity">
    <reaction evidence="1">
        <text>N-(5-phospho-beta-D-ribosyl)anthranilate + diphosphate = 5-phospho-alpha-D-ribose 1-diphosphate + anthranilate</text>
        <dbReference type="Rhea" id="RHEA:11768"/>
        <dbReference type="ChEBI" id="CHEBI:16567"/>
        <dbReference type="ChEBI" id="CHEBI:18277"/>
        <dbReference type="ChEBI" id="CHEBI:33019"/>
        <dbReference type="ChEBI" id="CHEBI:58017"/>
        <dbReference type="EC" id="2.4.2.18"/>
    </reaction>
</comment>
<comment type="cofactor">
    <cofactor evidence="1">
        <name>Mg(2+)</name>
        <dbReference type="ChEBI" id="CHEBI:18420"/>
    </cofactor>
    <text evidence="1">Binds 2 magnesium ions per monomer.</text>
</comment>
<comment type="pathway">
    <text evidence="1">Amino-acid biosynthesis; L-tryptophan biosynthesis; L-tryptophan from chorismate: step 2/5.</text>
</comment>
<comment type="subunit">
    <text evidence="1">Homodimer.</text>
</comment>
<comment type="similarity">
    <text evidence="1">Belongs to the anthranilate phosphoribosyltransferase family.</text>
</comment>
<organism>
    <name type="scientific">Streptococcus pneumoniae serotype 4 (strain ATCC BAA-334 / TIGR4)</name>
    <dbReference type="NCBI Taxonomy" id="170187"/>
    <lineage>
        <taxon>Bacteria</taxon>
        <taxon>Bacillati</taxon>
        <taxon>Bacillota</taxon>
        <taxon>Bacilli</taxon>
        <taxon>Lactobacillales</taxon>
        <taxon>Streptococcaceae</taxon>
        <taxon>Streptococcus</taxon>
    </lineage>
</organism>
<name>TRPD_STRPN</name>
<dbReference type="EC" id="2.4.2.18" evidence="1"/>
<dbReference type="EMBL" id="AE005672">
    <property type="protein sequence ID" value="AAK75888.1"/>
    <property type="molecule type" value="Genomic_DNA"/>
</dbReference>
<dbReference type="PIR" id="G95211">
    <property type="entry name" value="G95211"/>
</dbReference>
<dbReference type="RefSeq" id="WP_000658684.1">
    <property type="nucleotide sequence ID" value="NZ_CP155539.1"/>
</dbReference>
<dbReference type="SMR" id="P66999"/>
<dbReference type="PaxDb" id="170187-SP_1815"/>
<dbReference type="EnsemblBacteria" id="AAK75888">
    <property type="protein sequence ID" value="AAK75888"/>
    <property type="gene ID" value="SP_1815"/>
</dbReference>
<dbReference type="GeneID" id="45652966"/>
<dbReference type="KEGG" id="spn:SP_1815"/>
<dbReference type="eggNOG" id="COG0547">
    <property type="taxonomic scope" value="Bacteria"/>
</dbReference>
<dbReference type="PhylomeDB" id="P66999"/>
<dbReference type="BioCyc" id="SPNE170187:G1FZB-1847-MONOMER"/>
<dbReference type="UniPathway" id="UPA00035">
    <property type="reaction ID" value="UER00041"/>
</dbReference>
<dbReference type="Proteomes" id="UP000000585">
    <property type="component" value="Chromosome"/>
</dbReference>
<dbReference type="GO" id="GO:0005829">
    <property type="term" value="C:cytosol"/>
    <property type="evidence" value="ECO:0007669"/>
    <property type="project" value="TreeGrafter"/>
</dbReference>
<dbReference type="GO" id="GO:0004048">
    <property type="term" value="F:anthranilate phosphoribosyltransferase activity"/>
    <property type="evidence" value="ECO:0007669"/>
    <property type="project" value="UniProtKB-UniRule"/>
</dbReference>
<dbReference type="GO" id="GO:0000287">
    <property type="term" value="F:magnesium ion binding"/>
    <property type="evidence" value="ECO:0007669"/>
    <property type="project" value="UniProtKB-UniRule"/>
</dbReference>
<dbReference type="GO" id="GO:0000162">
    <property type="term" value="P:L-tryptophan biosynthetic process"/>
    <property type="evidence" value="ECO:0007669"/>
    <property type="project" value="UniProtKB-UniRule"/>
</dbReference>
<dbReference type="FunFam" id="3.40.1030.10:FF:000002">
    <property type="entry name" value="Anthranilate phosphoribosyltransferase"/>
    <property type="match status" value="1"/>
</dbReference>
<dbReference type="Gene3D" id="3.40.1030.10">
    <property type="entry name" value="Nucleoside phosphorylase/phosphoribosyltransferase catalytic domain"/>
    <property type="match status" value="1"/>
</dbReference>
<dbReference type="Gene3D" id="1.20.970.10">
    <property type="entry name" value="Transferase, Pyrimidine Nucleoside Phosphorylase, Chain C"/>
    <property type="match status" value="1"/>
</dbReference>
<dbReference type="HAMAP" id="MF_00211">
    <property type="entry name" value="TrpD"/>
    <property type="match status" value="1"/>
</dbReference>
<dbReference type="InterPro" id="IPR005940">
    <property type="entry name" value="Anthranilate_Pribosyl_Tfrase"/>
</dbReference>
<dbReference type="InterPro" id="IPR000312">
    <property type="entry name" value="Glycosyl_Trfase_fam3"/>
</dbReference>
<dbReference type="InterPro" id="IPR017459">
    <property type="entry name" value="Glycosyl_Trfase_fam3_N_dom"/>
</dbReference>
<dbReference type="InterPro" id="IPR036320">
    <property type="entry name" value="Glycosyl_Trfase_fam3_N_dom_sf"/>
</dbReference>
<dbReference type="InterPro" id="IPR035902">
    <property type="entry name" value="Nuc_phospho_transferase"/>
</dbReference>
<dbReference type="NCBIfam" id="TIGR01245">
    <property type="entry name" value="trpD"/>
    <property type="match status" value="1"/>
</dbReference>
<dbReference type="PANTHER" id="PTHR43285">
    <property type="entry name" value="ANTHRANILATE PHOSPHORIBOSYLTRANSFERASE"/>
    <property type="match status" value="1"/>
</dbReference>
<dbReference type="PANTHER" id="PTHR43285:SF2">
    <property type="entry name" value="ANTHRANILATE PHOSPHORIBOSYLTRANSFERASE"/>
    <property type="match status" value="1"/>
</dbReference>
<dbReference type="Pfam" id="PF02885">
    <property type="entry name" value="Glycos_trans_3N"/>
    <property type="match status" value="1"/>
</dbReference>
<dbReference type="Pfam" id="PF00591">
    <property type="entry name" value="Glycos_transf_3"/>
    <property type="match status" value="1"/>
</dbReference>
<dbReference type="SUPFAM" id="SSF52418">
    <property type="entry name" value="Nucleoside phosphorylase/phosphoribosyltransferase catalytic domain"/>
    <property type="match status" value="1"/>
</dbReference>
<dbReference type="SUPFAM" id="SSF47648">
    <property type="entry name" value="Nucleoside phosphorylase/phosphoribosyltransferase N-terminal domain"/>
    <property type="match status" value="1"/>
</dbReference>
<reference key="1">
    <citation type="journal article" date="2001" name="Science">
        <title>Complete genome sequence of a virulent isolate of Streptococcus pneumoniae.</title>
        <authorList>
            <person name="Tettelin H."/>
            <person name="Nelson K.E."/>
            <person name="Paulsen I.T."/>
            <person name="Eisen J.A."/>
            <person name="Read T.D."/>
            <person name="Peterson S.N."/>
            <person name="Heidelberg J.F."/>
            <person name="DeBoy R.T."/>
            <person name="Haft D.H."/>
            <person name="Dodson R.J."/>
            <person name="Durkin A.S."/>
            <person name="Gwinn M.L."/>
            <person name="Kolonay J.F."/>
            <person name="Nelson W.C."/>
            <person name="Peterson J.D."/>
            <person name="Umayam L.A."/>
            <person name="White O."/>
            <person name="Salzberg S.L."/>
            <person name="Lewis M.R."/>
            <person name="Radune D."/>
            <person name="Holtzapple E.K."/>
            <person name="Khouri H.M."/>
            <person name="Wolf A.M."/>
            <person name="Utterback T.R."/>
            <person name="Hansen C.L."/>
            <person name="McDonald L.A."/>
            <person name="Feldblyum T.V."/>
            <person name="Angiuoli S.V."/>
            <person name="Dickinson T."/>
            <person name="Hickey E.K."/>
            <person name="Holt I.E."/>
            <person name="Loftus B.J."/>
            <person name="Yang F."/>
            <person name="Smith H.O."/>
            <person name="Venter J.C."/>
            <person name="Dougherty B.A."/>
            <person name="Morrison D.A."/>
            <person name="Hollingshead S.K."/>
            <person name="Fraser C.M."/>
        </authorList>
    </citation>
    <scope>NUCLEOTIDE SEQUENCE [LARGE SCALE GENOMIC DNA]</scope>
    <source>
        <strain>ATCC BAA-334 / TIGR4</strain>
    </source>
</reference>
<evidence type="ECO:0000255" key="1">
    <source>
        <dbReference type="HAMAP-Rule" id="MF_00211"/>
    </source>
</evidence>
<feature type="chain" id="PRO_0000154492" description="Anthranilate phosphoribosyltransferase">
    <location>
        <begin position="1"/>
        <end position="334"/>
    </location>
</feature>
<feature type="binding site" evidence="1">
    <location>
        <position position="79"/>
    </location>
    <ligand>
        <name>5-phospho-alpha-D-ribose 1-diphosphate</name>
        <dbReference type="ChEBI" id="CHEBI:58017"/>
    </ligand>
</feature>
<feature type="binding site" evidence="1">
    <location>
        <position position="79"/>
    </location>
    <ligand>
        <name>anthranilate</name>
        <dbReference type="ChEBI" id="CHEBI:16567"/>
        <label>1</label>
    </ligand>
</feature>
<feature type="binding site" evidence="1">
    <location>
        <begin position="82"/>
        <end position="83"/>
    </location>
    <ligand>
        <name>5-phospho-alpha-D-ribose 1-diphosphate</name>
        <dbReference type="ChEBI" id="CHEBI:58017"/>
    </ligand>
</feature>
<feature type="binding site" evidence="1">
    <location>
        <position position="87"/>
    </location>
    <ligand>
        <name>5-phospho-alpha-D-ribose 1-diphosphate</name>
        <dbReference type="ChEBI" id="CHEBI:58017"/>
    </ligand>
</feature>
<feature type="binding site" evidence="1">
    <location>
        <begin position="89"/>
        <end position="92"/>
    </location>
    <ligand>
        <name>5-phospho-alpha-D-ribose 1-diphosphate</name>
        <dbReference type="ChEBI" id="CHEBI:58017"/>
    </ligand>
</feature>
<feature type="binding site" evidence="1">
    <location>
        <position position="91"/>
    </location>
    <ligand>
        <name>Mg(2+)</name>
        <dbReference type="ChEBI" id="CHEBI:18420"/>
        <label>1</label>
    </ligand>
</feature>
<feature type="binding site" evidence="1">
    <location>
        <begin position="107"/>
        <end position="115"/>
    </location>
    <ligand>
        <name>5-phospho-alpha-D-ribose 1-diphosphate</name>
        <dbReference type="ChEBI" id="CHEBI:58017"/>
    </ligand>
</feature>
<feature type="binding site" evidence="1">
    <location>
        <position position="110"/>
    </location>
    <ligand>
        <name>anthranilate</name>
        <dbReference type="ChEBI" id="CHEBI:16567"/>
        <label>1</label>
    </ligand>
</feature>
<feature type="binding site" evidence="1">
    <location>
        <position position="119"/>
    </location>
    <ligand>
        <name>5-phospho-alpha-D-ribose 1-diphosphate</name>
        <dbReference type="ChEBI" id="CHEBI:58017"/>
    </ligand>
</feature>
<feature type="binding site" evidence="1">
    <location>
        <position position="165"/>
    </location>
    <ligand>
        <name>anthranilate</name>
        <dbReference type="ChEBI" id="CHEBI:16567"/>
        <label>2</label>
    </ligand>
</feature>
<feature type="binding site" evidence="1">
    <location>
        <position position="224"/>
    </location>
    <ligand>
        <name>Mg(2+)</name>
        <dbReference type="ChEBI" id="CHEBI:18420"/>
        <label>2</label>
    </ligand>
</feature>
<feature type="binding site" evidence="1">
    <location>
        <position position="225"/>
    </location>
    <ligand>
        <name>Mg(2+)</name>
        <dbReference type="ChEBI" id="CHEBI:18420"/>
        <label>1</label>
    </ligand>
</feature>
<feature type="binding site" evidence="1">
    <location>
        <position position="225"/>
    </location>
    <ligand>
        <name>Mg(2+)</name>
        <dbReference type="ChEBI" id="CHEBI:18420"/>
        <label>2</label>
    </ligand>
</feature>
<gene>
    <name evidence="1" type="primary">trpD</name>
    <name type="ordered locus">SP_1815</name>
</gene>
<keyword id="KW-0028">Amino-acid biosynthesis</keyword>
<keyword id="KW-0057">Aromatic amino acid biosynthesis</keyword>
<keyword id="KW-0328">Glycosyltransferase</keyword>
<keyword id="KW-0460">Magnesium</keyword>
<keyword id="KW-0479">Metal-binding</keyword>
<keyword id="KW-1185">Reference proteome</keyword>
<keyword id="KW-0808">Transferase</keyword>
<keyword id="KW-0822">Tryptophan biosynthesis</keyword>
<accession>P66999</accession>
<accession>Q97P29</accession>